<accession>A0JXS7</accession>
<feature type="chain" id="PRO_1000066550" description="Acyl carrier protein">
    <location>
        <begin position="1"/>
        <end position="81"/>
    </location>
</feature>
<feature type="domain" description="Carrier" evidence="2">
    <location>
        <begin position="2"/>
        <end position="80"/>
    </location>
</feature>
<feature type="modified residue" description="O-(pantetheine 4'-phosphoryl)serine" evidence="2">
    <location>
        <position position="40"/>
    </location>
</feature>
<protein>
    <recommendedName>
        <fullName evidence="1">Acyl carrier protein</fullName>
        <shortName evidence="1">ACP</shortName>
    </recommendedName>
</protein>
<comment type="function">
    <text evidence="1">Carrier of the growing fatty acid chain in fatty acid biosynthesis.</text>
</comment>
<comment type="pathway">
    <text evidence="1">Lipid metabolism; fatty acid biosynthesis.</text>
</comment>
<comment type="subcellular location">
    <subcellularLocation>
        <location evidence="1">Cytoplasm</location>
    </subcellularLocation>
</comment>
<comment type="PTM">
    <text evidence="1">4'-phosphopantetheine is transferred from CoA to a specific serine of apo-ACP by AcpS. This modification is essential for activity because fatty acids are bound in thioester linkage to the sulfhydryl of the prosthetic group.</text>
</comment>
<comment type="similarity">
    <text evidence="1">Belongs to the acyl carrier protein (ACP) family.</text>
</comment>
<keyword id="KW-0963">Cytoplasm</keyword>
<keyword id="KW-0275">Fatty acid biosynthesis</keyword>
<keyword id="KW-0276">Fatty acid metabolism</keyword>
<keyword id="KW-0444">Lipid biosynthesis</keyword>
<keyword id="KW-0443">Lipid metabolism</keyword>
<keyword id="KW-0596">Phosphopantetheine</keyword>
<keyword id="KW-0597">Phosphoprotein</keyword>
<keyword id="KW-1185">Reference proteome</keyword>
<organism>
    <name type="scientific">Arthrobacter sp. (strain FB24)</name>
    <dbReference type="NCBI Taxonomy" id="290399"/>
    <lineage>
        <taxon>Bacteria</taxon>
        <taxon>Bacillati</taxon>
        <taxon>Actinomycetota</taxon>
        <taxon>Actinomycetes</taxon>
        <taxon>Micrococcales</taxon>
        <taxon>Micrococcaceae</taxon>
        <taxon>Arthrobacter</taxon>
    </lineage>
</organism>
<gene>
    <name evidence="1" type="primary">acpP</name>
    <name type="ordered locus">Arth_2468</name>
</gene>
<reference key="1">
    <citation type="journal article" date="2013" name="Stand. Genomic Sci.">
        <title>Complete genome sequence of Arthrobacter sp. strain FB24.</title>
        <authorList>
            <person name="Nakatsu C.H."/>
            <person name="Barabote R."/>
            <person name="Thompson S."/>
            <person name="Bruce D."/>
            <person name="Detter C."/>
            <person name="Brettin T."/>
            <person name="Han C."/>
            <person name="Beasley F."/>
            <person name="Chen W."/>
            <person name="Konopka A."/>
            <person name="Xie G."/>
        </authorList>
    </citation>
    <scope>NUCLEOTIDE SEQUENCE [LARGE SCALE GENOMIC DNA]</scope>
    <source>
        <strain>FB24</strain>
    </source>
</reference>
<name>ACP_ARTS2</name>
<sequence>MASNEEILAGLAEIVNEETGLATEAVELDKSFTEDLDIDSISMMTIVVNAEEKFGVRIPDEEVKNLKTVGDAVSFIANAQA</sequence>
<evidence type="ECO:0000255" key="1">
    <source>
        <dbReference type="HAMAP-Rule" id="MF_01217"/>
    </source>
</evidence>
<evidence type="ECO:0000255" key="2">
    <source>
        <dbReference type="PROSITE-ProRule" id="PRU00258"/>
    </source>
</evidence>
<dbReference type="EMBL" id="CP000454">
    <property type="protein sequence ID" value="ABK03847.1"/>
    <property type="molecule type" value="Genomic_DNA"/>
</dbReference>
<dbReference type="RefSeq" id="WP_011692310.1">
    <property type="nucleotide sequence ID" value="NC_008541.1"/>
</dbReference>
<dbReference type="SMR" id="A0JXS7"/>
<dbReference type="STRING" id="290399.Arth_2468"/>
<dbReference type="KEGG" id="art:Arth_2468"/>
<dbReference type="eggNOG" id="COG0236">
    <property type="taxonomic scope" value="Bacteria"/>
</dbReference>
<dbReference type="HOGENOM" id="CLU_108696_5_6_11"/>
<dbReference type="OrthoDB" id="9804551at2"/>
<dbReference type="UniPathway" id="UPA00094"/>
<dbReference type="Proteomes" id="UP000000754">
    <property type="component" value="Chromosome"/>
</dbReference>
<dbReference type="GO" id="GO:0005829">
    <property type="term" value="C:cytosol"/>
    <property type="evidence" value="ECO:0007669"/>
    <property type="project" value="TreeGrafter"/>
</dbReference>
<dbReference type="GO" id="GO:0016020">
    <property type="term" value="C:membrane"/>
    <property type="evidence" value="ECO:0007669"/>
    <property type="project" value="GOC"/>
</dbReference>
<dbReference type="GO" id="GO:0000035">
    <property type="term" value="F:acyl binding"/>
    <property type="evidence" value="ECO:0007669"/>
    <property type="project" value="TreeGrafter"/>
</dbReference>
<dbReference type="GO" id="GO:0000036">
    <property type="term" value="F:acyl carrier activity"/>
    <property type="evidence" value="ECO:0007669"/>
    <property type="project" value="UniProtKB-UniRule"/>
</dbReference>
<dbReference type="GO" id="GO:0009245">
    <property type="term" value="P:lipid A biosynthetic process"/>
    <property type="evidence" value="ECO:0007669"/>
    <property type="project" value="TreeGrafter"/>
</dbReference>
<dbReference type="Gene3D" id="1.10.1200.10">
    <property type="entry name" value="ACP-like"/>
    <property type="match status" value="1"/>
</dbReference>
<dbReference type="HAMAP" id="MF_01217">
    <property type="entry name" value="Acyl_carrier"/>
    <property type="match status" value="1"/>
</dbReference>
<dbReference type="InterPro" id="IPR003231">
    <property type="entry name" value="ACP"/>
</dbReference>
<dbReference type="InterPro" id="IPR036736">
    <property type="entry name" value="ACP-like_sf"/>
</dbReference>
<dbReference type="InterPro" id="IPR009081">
    <property type="entry name" value="PP-bd_ACP"/>
</dbReference>
<dbReference type="NCBIfam" id="NF002147">
    <property type="entry name" value="PRK00982.1-1"/>
    <property type="match status" value="1"/>
</dbReference>
<dbReference type="NCBIfam" id="NF002150">
    <property type="entry name" value="PRK00982.1-4"/>
    <property type="match status" value="1"/>
</dbReference>
<dbReference type="PANTHER" id="PTHR20863">
    <property type="entry name" value="ACYL CARRIER PROTEIN"/>
    <property type="match status" value="1"/>
</dbReference>
<dbReference type="PANTHER" id="PTHR20863:SF76">
    <property type="entry name" value="CARRIER DOMAIN-CONTAINING PROTEIN"/>
    <property type="match status" value="1"/>
</dbReference>
<dbReference type="Pfam" id="PF00550">
    <property type="entry name" value="PP-binding"/>
    <property type="match status" value="1"/>
</dbReference>
<dbReference type="SUPFAM" id="SSF47336">
    <property type="entry name" value="ACP-like"/>
    <property type="match status" value="1"/>
</dbReference>
<dbReference type="PROSITE" id="PS50075">
    <property type="entry name" value="CARRIER"/>
    <property type="match status" value="1"/>
</dbReference>
<proteinExistence type="inferred from homology"/>